<protein>
    <recommendedName>
        <fullName evidence="1">N(4)-bis(aminopropyl)spermidine synthase</fullName>
        <ecNumber evidence="1">2.5.1.128</ecNumber>
    </recommendedName>
    <alternativeName>
        <fullName evidence="1">Branched-chain polyamine synthase A</fullName>
    </alternativeName>
</protein>
<evidence type="ECO:0000255" key="1">
    <source>
        <dbReference type="HAMAP-Rule" id="MF_01947"/>
    </source>
</evidence>
<reference key="1">
    <citation type="journal article" date="1996" name="Science">
        <title>Complete genome sequence of the methanogenic archaeon, Methanococcus jannaschii.</title>
        <authorList>
            <person name="Bult C.J."/>
            <person name="White O."/>
            <person name="Olsen G.J."/>
            <person name="Zhou L."/>
            <person name="Fleischmann R.D."/>
            <person name="Sutton G.G."/>
            <person name="Blake J.A."/>
            <person name="FitzGerald L.M."/>
            <person name="Clayton R.A."/>
            <person name="Gocayne J.D."/>
            <person name="Kerlavage A.R."/>
            <person name="Dougherty B.A."/>
            <person name="Tomb J.-F."/>
            <person name="Adams M.D."/>
            <person name="Reich C.I."/>
            <person name="Overbeek R."/>
            <person name="Kirkness E.F."/>
            <person name="Weinstock K.G."/>
            <person name="Merrick J.M."/>
            <person name="Glodek A."/>
            <person name="Scott J.L."/>
            <person name="Geoghagen N.S.M."/>
            <person name="Weidman J.F."/>
            <person name="Fuhrmann J.L."/>
            <person name="Nguyen D."/>
            <person name="Utterback T.R."/>
            <person name="Kelley J.M."/>
            <person name="Peterson J.D."/>
            <person name="Sadow P.W."/>
            <person name="Hanna M.C."/>
            <person name="Cotton M.D."/>
            <person name="Roberts K.M."/>
            <person name="Hurst M.A."/>
            <person name="Kaine B.P."/>
            <person name="Borodovsky M."/>
            <person name="Klenk H.-P."/>
            <person name="Fraser C.M."/>
            <person name="Smith H.O."/>
            <person name="Woese C.R."/>
            <person name="Venter J.C."/>
        </authorList>
    </citation>
    <scope>NUCLEOTIDE SEQUENCE [LARGE SCALE GENOMIC DNA]</scope>
    <source>
        <strain>ATCC 43067 / DSM 2661 / JAL-1 / JCM 10045 / NBRC 100440</strain>
    </source>
</reference>
<keyword id="KW-0963">Cytoplasm</keyword>
<keyword id="KW-0620">Polyamine biosynthesis</keyword>
<keyword id="KW-1185">Reference proteome</keyword>
<keyword id="KW-0808">Transferase</keyword>
<dbReference type="EC" id="2.5.1.128" evidence="1"/>
<dbReference type="EMBL" id="L77117">
    <property type="protein sequence ID" value="AAB99279.1"/>
    <property type="molecule type" value="Genomic_DNA"/>
</dbReference>
<dbReference type="PIR" id="H64458">
    <property type="entry name" value="H64458"/>
</dbReference>
<dbReference type="RefSeq" id="WP_010870786.1">
    <property type="nucleotide sequence ID" value="NC_000909.1"/>
</dbReference>
<dbReference type="SMR" id="Q58669"/>
<dbReference type="STRING" id="243232.MJ_1273"/>
<dbReference type="PaxDb" id="243232-MJ_1273"/>
<dbReference type="EnsemblBacteria" id="AAB99279">
    <property type="protein sequence ID" value="AAB99279"/>
    <property type="gene ID" value="MJ_1273"/>
</dbReference>
<dbReference type="GeneID" id="1452171"/>
<dbReference type="KEGG" id="mja:MJ_1273"/>
<dbReference type="eggNOG" id="arCOG00913">
    <property type="taxonomic scope" value="Archaea"/>
</dbReference>
<dbReference type="HOGENOM" id="CLU_042160_0_0_2"/>
<dbReference type="InParanoid" id="Q58669"/>
<dbReference type="OrthoDB" id="358909at2157"/>
<dbReference type="PhylomeDB" id="Q58669"/>
<dbReference type="Proteomes" id="UP000000805">
    <property type="component" value="Chromosome"/>
</dbReference>
<dbReference type="GO" id="GO:0005737">
    <property type="term" value="C:cytoplasm"/>
    <property type="evidence" value="ECO:0007669"/>
    <property type="project" value="UniProtKB-SubCell"/>
</dbReference>
<dbReference type="GO" id="GO:0016740">
    <property type="term" value="F:transferase activity"/>
    <property type="evidence" value="ECO:0000318"/>
    <property type="project" value="GO_Central"/>
</dbReference>
<dbReference type="GO" id="GO:0016765">
    <property type="term" value="F:transferase activity, transferring alkyl or aryl (other than methyl) groups"/>
    <property type="evidence" value="ECO:0007669"/>
    <property type="project" value="UniProtKB-UniRule"/>
</dbReference>
<dbReference type="GO" id="GO:0006596">
    <property type="term" value="P:polyamine biosynthetic process"/>
    <property type="evidence" value="ECO:0000318"/>
    <property type="project" value="GO_Central"/>
</dbReference>
<dbReference type="CDD" id="cd02440">
    <property type="entry name" value="AdoMet_MTases"/>
    <property type="match status" value="1"/>
</dbReference>
<dbReference type="Gene3D" id="3.40.50.150">
    <property type="entry name" value="Vaccinia Virus protein VP39"/>
    <property type="match status" value="1"/>
</dbReference>
<dbReference type="Gene3D" id="1.10.10.10">
    <property type="entry name" value="Winged helix-like DNA-binding domain superfamily/Winged helix DNA-binding domain"/>
    <property type="match status" value="1"/>
</dbReference>
<dbReference type="HAMAP" id="MF_01947">
    <property type="entry name" value="Aminopropyltransf_BpsA"/>
    <property type="match status" value="1"/>
</dbReference>
<dbReference type="InterPro" id="IPR014435">
    <property type="entry name" value="BpsA"/>
</dbReference>
<dbReference type="InterPro" id="IPR002723">
    <property type="entry name" value="BpsA_C"/>
</dbReference>
<dbReference type="InterPro" id="IPR051720">
    <property type="entry name" value="rRNA_MeTrfase/Polyamine_Synth"/>
</dbReference>
<dbReference type="InterPro" id="IPR029063">
    <property type="entry name" value="SAM-dependent_MTases_sf"/>
</dbReference>
<dbReference type="InterPro" id="IPR036388">
    <property type="entry name" value="WH-like_DNA-bd_sf"/>
</dbReference>
<dbReference type="PANTHER" id="PTHR23290">
    <property type="entry name" value="RRNA N6-ADENOSINE-METHYLTRANSFERASE METTL5"/>
    <property type="match status" value="1"/>
</dbReference>
<dbReference type="PANTHER" id="PTHR23290:SF0">
    <property type="entry name" value="RRNA N6-ADENOSINE-METHYLTRANSFERASE METTL5"/>
    <property type="match status" value="1"/>
</dbReference>
<dbReference type="Pfam" id="PF01861">
    <property type="entry name" value="BpsA_C"/>
    <property type="match status" value="1"/>
</dbReference>
<dbReference type="PIRSF" id="PIRSF005895">
    <property type="entry name" value="UCP005895_mtase"/>
    <property type="match status" value="1"/>
</dbReference>
<dbReference type="SUPFAM" id="SSF53335">
    <property type="entry name" value="S-adenosyl-L-methionine-dependent methyltransferases"/>
    <property type="match status" value="1"/>
</dbReference>
<accession>Q58669</accession>
<comment type="function">
    <text evidence="1">Involved in the biosynthesis of branched-chain polyamines, which support the growth of thermophiles under high-temperature conditions. Catalyzes the sequential condensation of spermidine with the aminopropyl groups of decarboxylated S-adenosylmethionines to produce N(4)-bis(aminopropyl)spermidine via N(4)-aminopropylspermidine.</text>
</comment>
<comment type="catalytic activity">
    <reaction evidence="1">
        <text>2 S-adenosyl 3-(methylsulfanyl)propylamine + spermidine = N(4)-bis(aminopropyl)spermidine + 2 S-methyl-5'-thioadenosine + 2 H(+)</text>
        <dbReference type="Rhea" id="RHEA:44132"/>
        <dbReference type="ChEBI" id="CHEBI:15378"/>
        <dbReference type="ChEBI" id="CHEBI:17509"/>
        <dbReference type="ChEBI" id="CHEBI:57443"/>
        <dbReference type="ChEBI" id="CHEBI:57834"/>
        <dbReference type="ChEBI" id="CHEBI:82771"/>
        <dbReference type="EC" id="2.5.1.128"/>
    </reaction>
</comment>
<comment type="pathway">
    <text evidence="1">Amine and polyamine biosynthesis.</text>
</comment>
<comment type="subcellular location">
    <subcellularLocation>
        <location evidence="1">Cytoplasm</location>
    </subcellularLocation>
</comment>
<comment type="similarity">
    <text evidence="1">Belongs to the branched-chain polyamine synthase family.</text>
</comment>
<proteinExistence type="inferred from homology"/>
<sequence length="350" mass="40420">MERILEKVRAKSEIPVYDKSIENVLSAILTTNDFWKIVDLSEEPLPLVADIIRILEEEGLVKISNGIEFTEKGNEFIKSYGIGAKDNSVCECCEGRGVSLKNYQDLLERFKEIVKNRPMPKHEYDQGFVTPECTISRIALMNSRGDLFNKDVLVLGDDDLTSIALMLSNLPKKIVVVDIDDRLINFIKEVAEQLNYKNIEVITLDLRKPLPEKYSRAFDTFITDPPETVYAVKTFIGRGISALKGERRAGYFGITRRESSLDKWREIQRTLINDFNVVITDIIRNFNHYVNWGYEEETRAWKLAPVKKKPEDIWYKSYMFRIETLKDSRGFEEEVDVGDELYNDAESSTT</sequence>
<organism>
    <name type="scientific">Methanocaldococcus jannaschii (strain ATCC 43067 / DSM 2661 / JAL-1 / JCM 10045 / NBRC 100440)</name>
    <name type="common">Methanococcus jannaschii</name>
    <dbReference type="NCBI Taxonomy" id="243232"/>
    <lineage>
        <taxon>Archaea</taxon>
        <taxon>Methanobacteriati</taxon>
        <taxon>Methanobacteriota</taxon>
        <taxon>Methanomada group</taxon>
        <taxon>Methanococci</taxon>
        <taxon>Methanococcales</taxon>
        <taxon>Methanocaldococcaceae</taxon>
        <taxon>Methanocaldococcus</taxon>
    </lineage>
</organism>
<gene>
    <name evidence="1" type="primary">bpsA</name>
    <name type="ordered locus">MJ1273</name>
</gene>
<name>BPSA_METJA</name>
<feature type="chain" id="PRO_0000107245" description="N(4)-bis(aminopropyl)spermidine synthase">
    <location>
        <begin position="1"/>
        <end position="350"/>
    </location>
</feature>